<comment type="function">
    <text evidence="1 4">Has a dual function in spindle-assembly checkpoint signaling and in promoting the establishment of correct kinetochore-microtubule (K-MT) attachments. Promotes the formation of stable end-on bipolar attachments. Necessary for kinetochore localization of BUB1. The BUB1/BUB3 complex plays a role in the inhibition of anaphase-promoting complex or cyclosome (APC/C) when spindle-assembly checkpoint is activated and inhibits the ubiquitin ligase activity of APC/C by phosphorylating its activator CDC20. This complex can also phosphorylate MAD1L1 (By similarity). Regulates chromosome segregation during oocyte meiosis.</text>
</comment>
<comment type="subunit">
    <text evidence="1">Interacts with BUB1 and BUBR1. The BUB1/BUB3 complex interacts with MAD1L1. Interacts with ZNF207/BuGZ; leading to promote stability and kinetochore loading of BUB3 (By similarity).</text>
</comment>
<comment type="subcellular location">
    <subcellularLocation>
        <location evidence="1">Nucleus</location>
    </subcellularLocation>
    <subcellularLocation>
        <location evidence="4">Chromosome</location>
        <location evidence="4">Centromere</location>
        <location evidence="4">Kinetochore</location>
    </subcellularLocation>
    <text evidence="1">Starts to localize at kinetochores in prometaphase I (Pro-MI) stage and maintains the localization until the metaphase I-anaphase I (MI-AI) transition.</text>
</comment>
<comment type="PTM">
    <text evidence="3">Poly-ADP-ribosylated by PARP1.</text>
</comment>
<comment type="PTM">
    <text evidence="2">Ubiquitinated by UBR5, promoting disassembly of the mitotic checkpoint complex from the APC/C complex.</text>
</comment>
<comment type="similarity">
    <text evidence="5">Belongs to the WD repeat BUB3 family.</text>
</comment>
<comment type="sequence caution" evidence="5">
    <conflict type="frameshift">
        <sequence resource="EMBL-CDS" id="AAB39606"/>
    </conflict>
</comment>
<reference key="1">
    <citation type="journal article" date="1999" name="Proc. Natl. Acad. Sci. U.S.A.">
        <title>Retention of the BUB3 checkpoint protein on lagging chromosomes.</title>
        <authorList>
            <person name="Martinez-Exposito M.J."/>
            <person name="Kaplan K.B."/>
            <person name="Copeland J."/>
            <person name="Sorger P.K."/>
        </authorList>
    </citation>
    <scope>NUCLEOTIDE SEQUENCE [MRNA]</scope>
    <source>
        <tissue>Embryo</tissue>
    </source>
</reference>
<reference key="2">
    <citation type="submission" date="1996-08" db="EMBL/GenBank/DDBJ databases">
        <authorList>
            <person name="Downs A."/>
            <person name="Xie X."/>
            <person name="Yan W."/>
            <person name="Li J."/>
            <person name="Palacios R."/>
        </authorList>
    </citation>
    <scope>NUCLEOTIDE SEQUENCE [MRNA]</scope>
    <source>
        <strain>C57BL/6 X 129/Sv</strain>
        <tissue>Bone marrow</tissue>
    </source>
</reference>
<reference key="3">
    <citation type="journal article" date="2005" name="Science">
        <title>The transcriptional landscape of the mammalian genome.</title>
        <authorList>
            <person name="Carninci P."/>
            <person name="Kasukawa T."/>
            <person name="Katayama S."/>
            <person name="Gough J."/>
            <person name="Frith M.C."/>
            <person name="Maeda N."/>
            <person name="Oyama R."/>
            <person name="Ravasi T."/>
            <person name="Lenhard B."/>
            <person name="Wells C."/>
            <person name="Kodzius R."/>
            <person name="Shimokawa K."/>
            <person name="Bajic V.B."/>
            <person name="Brenner S.E."/>
            <person name="Batalov S."/>
            <person name="Forrest A.R."/>
            <person name="Zavolan M."/>
            <person name="Davis M.J."/>
            <person name="Wilming L.G."/>
            <person name="Aidinis V."/>
            <person name="Allen J.E."/>
            <person name="Ambesi-Impiombato A."/>
            <person name="Apweiler R."/>
            <person name="Aturaliya R.N."/>
            <person name="Bailey T.L."/>
            <person name="Bansal M."/>
            <person name="Baxter L."/>
            <person name="Beisel K.W."/>
            <person name="Bersano T."/>
            <person name="Bono H."/>
            <person name="Chalk A.M."/>
            <person name="Chiu K.P."/>
            <person name="Choudhary V."/>
            <person name="Christoffels A."/>
            <person name="Clutterbuck D.R."/>
            <person name="Crowe M.L."/>
            <person name="Dalla E."/>
            <person name="Dalrymple B.P."/>
            <person name="de Bono B."/>
            <person name="Della Gatta G."/>
            <person name="di Bernardo D."/>
            <person name="Down T."/>
            <person name="Engstrom P."/>
            <person name="Fagiolini M."/>
            <person name="Faulkner G."/>
            <person name="Fletcher C.F."/>
            <person name="Fukushima T."/>
            <person name="Furuno M."/>
            <person name="Futaki S."/>
            <person name="Gariboldi M."/>
            <person name="Georgii-Hemming P."/>
            <person name="Gingeras T.R."/>
            <person name="Gojobori T."/>
            <person name="Green R.E."/>
            <person name="Gustincich S."/>
            <person name="Harbers M."/>
            <person name="Hayashi Y."/>
            <person name="Hensch T.K."/>
            <person name="Hirokawa N."/>
            <person name="Hill D."/>
            <person name="Huminiecki L."/>
            <person name="Iacono M."/>
            <person name="Ikeo K."/>
            <person name="Iwama A."/>
            <person name="Ishikawa T."/>
            <person name="Jakt M."/>
            <person name="Kanapin A."/>
            <person name="Katoh M."/>
            <person name="Kawasawa Y."/>
            <person name="Kelso J."/>
            <person name="Kitamura H."/>
            <person name="Kitano H."/>
            <person name="Kollias G."/>
            <person name="Krishnan S.P."/>
            <person name="Kruger A."/>
            <person name="Kummerfeld S.K."/>
            <person name="Kurochkin I.V."/>
            <person name="Lareau L.F."/>
            <person name="Lazarevic D."/>
            <person name="Lipovich L."/>
            <person name="Liu J."/>
            <person name="Liuni S."/>
            <person name="McWilliam S."/>
            <person name="Madan Babu M."/>
            <person name="Madera M."/>
            <person name="Marchionni L."/>
            <person name="Matsuda H."/>
            <person name="Matsuzawa S."/>
            <person name="Miki H."/>
            <person name="Mignone F."/>
            <person name="Miyake S."/>
            <person name="Morris K."/>
            <person name="Mottagui-Tabar S."/>
            <person name="Mulder N."/>
            <person name="Nakano N."/>
            <person name="Nakauchi H."/>
            <person name="Ng P."/>
            <person name="Nilsson R."/>
            <person name="Nishiguchi S."/>
            <person name="Nishikawa S."/>
            <person name="Nori F."/>
            <person name="Ohara O."/>
            <person name="Okazaki Y."/>
            <person name="Orlando V."/>
            <person name="Pang K.C."/>
            <person name="Pavan W.J."/>
            <person name="Pavesi G."/>
            <person name="Pesole G."/>
            <person name="Petrovsky N."/>
            <person name="Piazza S."/>
            <person name="Reed J."/>
            <person name="Reid J.F."/>
            <person name="Ring B.Z."/>
            <person name="Ringwald M."/>
            <person name="Rost B."/>
            <person name="Ruan Y."/>
            <person name="Salzberg S.L."/>
            <person name="Sandelin A."/>
            <person name="Schneider C."/>
            <person name="Schoenbach C."/>
            <person name="Sekiguchi K."/>
            <person name="Semple C.A."/>
            <person name="Seno S."/>
            <person name="Sessa L."/>
            <person name="Sheng Y."/>
            <person name="Shibata Y."/>
            <person name="Shimada H."/>
            <person name="Shimada K."/>
            <person name="Silva D."/>
            <person name="Sinclair B."/>
            <person name="Sperling S."/>
            <person name="Stupka E."/>
            <person name="Sugiura K."/>
            <person name="Sultana R."/>
            <person name="Takenaka Y."/>
            <person name="Taki K."/>
            <person name="Tammoja K."/>
            <person name="Tan S.L."/>
            <person name="Tang S."/>
            <person name="Taylor M.S."/>
            <person name="Tegner J."/>
            <person name="Teichmann S.A."/>
            <person name="Ueda H.R."/>
            <person name="van Nimwegen E."/>
            <person name="Verardo R."/>
            <person name="Wei C.L."/>
            <person name="Yagi K."/>
            <person name="Yamanishi H."/>
            <person name="Zabarovsky E."/>
            <person name="Zhu S."/>
            <person name="Zimmer A."/>
            <person name="Hide W."/>
            <person name="Bult C."/>
            <person name="Grimmond S.M."/>
            <person name="Teasdale R.D."/>
            <person name="Liu E.T."/>
            <person name="Brusic V."/>
            <person name="Quackenbush J."/>
            <person name="Wahlestedt C."/>
            <person name="Mattick J.S."/>
            <person name="Hume D.A."/>
            <person name="Kai C."/>
            <person name="Sasaki D."/>
            <person name="Tomaru Y."/>
            <person name="Fukuda S."/>
            <person name="Kanamori-Katayama M."/>
            <person name="Suzuki M."/>
            <person name="Aoki J."/>
            <person name="Arakawa T."/>
            <person name="Iida J."/>
            <person name="Imamura K."/>
            <person name="Itoh M."/>
            <person name="Kato T."/>
            <person name="Kawaji H."/>
            <person name="Kawagashira N."/>
            <person name="Kawashima T."/>
            <person name="Kojima M."/>
            <person name="Kondo S."/>
            <person name="Konno H."/>
            <person name="Nakano K."/>
            <person name="Ninomiya N."/>
            <person name="Nishio T."/>
            <person name="Okada M."/>
            <person name="Plessy C."/>
            <person name="Shibata K."/>
            <person name="Shiraki T."/>
            <person name="Suzuki S."/>
            <person name="Tagami M."/>
            <person name="Waki K."/>
            <person name="Watahiki A."/>
            <person name="Okamura-Oho Y."/>
            <person name="Suzuki H."/>
            <person name="Kawai J."/>
            <person name="Hayashizaki Y."/>
        </authorList>
    </citation>
    <scope>NUCLEOTIDE SEQUENCE [LARGE SCALE MRNA]</scope>
    <source>
        <strain>NOD</strain>
        <tissue>Thymus</tissue>
    </source>
</reference>
<reference key="4">
    <citation type="journal article" date="2004" name="Genome Res.">
        <title>The status, quality, and expansion of the NIH full-length cDNA project: the Mammalian Gene Collection (MGC).</title>
        <authorList>
            <consortium name="The MGC Project Team"/>
        </authorList>
    </citation>
    <scope>NUCLEOTIDE SEQUENCE [LARGE SCALE MRNA]</scope>
    <source>
        <strain>Czech II</strain>
        <tissue>Mammary tumor</tissue>
    </source>
</reference>
<reference key="5">
    <citation type="journal article" date="2002" name="J. Biol. Chem.">
        <title>Centromere proteins Cenpa, Cenpb, and Bub3 interact with poly(ADP-ribose) polymerase-1 protein and are poly(ADP-ribosyl)ated.</title>
        <authorList>
            <person name="Saxena A."/>
            <person name="Saffery R."/>
            <person name="Wong L.H."/>
            <person name="Kalitsis P."/>
            <person name="Choo K.H."/>
        </authorList>
    </citation>
    <scope>POLY-ADP-RIBOSYLATION BY PARP1</scope>
</reference>
<reference key="6">
    <citation type="journal article" date="2009" name="PLoS ONE">
        <title>Bub3 is a spindle assembly checkpoint protein regulating chromosome segregation during mouse oocyte meiosis.</title>
        <authorList>
            <person name="Li M."/>
            <person name="Li S."/>
            <person name="Yuan J."/>
            <person name="Wang Z.B."/>
            <person name="Sun S.C."/>
            <person name="Schatten H."/>
            <person name="Sun Q.Y."/>
        </authorList>
    </citation>
    <scope>FUNCTION</scope>
    <scope>SUBCELLULAR LOCATION</scope>
</reference>
<reference key="7">
    <citation type="journal article" date="2010" name="Cell">
        <title>A tissue-specific atlas of mouse protein phosphorylation and expression.</title>
        <authorList>
            <person name="Huttlin E.L."/>
            <person name="Jedrychowski M.P."/>
            <person name="Elias J.E."/>
            <person name="Goswami T."/>
            <person name="Rad R."/>
            <person name="Beausoleil S.A."/>
            <person name="Villen J."/>
            <person name="Haas W."/>
            <person name="Sowa M.E."/>
            <person name="Gygi S.P."/>
        </authorList>
    </citation>
    <scope>IDENTIFICATION BY MASS SPECTROMETRY [LARGE SCALE ANALYSIS]</scope>
    <source>
        <tissue>Brain</tissue>
        <tissue>Brown adipose tissue</tissue>
        <tissue>Heart</tissue>
        <tissue>Kidney</tissue>
        <tissue>Liver</tissue>
        <tissue>Lung</tissue>
        <tissue>Pancreas</tissue>
        <tissue>Spleen</tissue>
        <tissue>Testis</tissue>
    </source>
</reference>
<keyword id="KW-0007">Acetylation</keyword>
<keyword id="KW-0013">ADP-ribosylation</keyword>
<keyword id="KW-0131">Cell cycle</keyword>
<keyword id="KW-0132">Cell division</keyword>
<keyword id="KW-0137">Centromere</keyword>
<keyword id="KW-0158">Chromosome</keyword>
<keyword id="KW-0159">Chromosome partition</keyword>
<keyword id="KW-1017">Isopeptide bond</keyword>
<keyword id="KW-0995">Kinetochore</keyword>
<keyword id="KW-0469">Meiosis</keyword>
<keyword id="KW-0498">Mitosis</keyword>
<keyword id="KW-0539">Nucleus</keyword>
<keyword id="KW-0597">Phosphoprotein</keyword>
<keyword id="KW-1185">Reference proteome</keyword>
<keyword id="KW-0677">Repeat</keyword>
<keyword id="KW-0832">Ubl conjugation</keyword>
<keyword id="KW-0853">WD repeat</keyword>
<evidence type="ECO:0000250" key="1"/>
<evidence type="ECO:0000250" key="2">
    <source>
        <dbReference type="UniProtKB" id="O43684"/>
    </source>
</evidence>
<evidence type="ECO:0000269" key="3">
    <source>
    </source>
</evidence>
<evidence type="ECO:0000269" key="4">
    <source>
    </source>
</evidence>
<evidence type="ECO:0000305" key="5"/>
<name>BUB3_MOUSE</name>
<proteinExistence type="evidence at protein level"/>
<feature type="chain" id="PRO_0000050892" description="Mitotic checkpoint protein BUB3">
    <location>
        <begin position="1"/>
        <end position="326"/>
    </location>
</feature>
<feature type="repeat" description="WD 1">
    <location>
        <begin position="5"/>
        <end position="43"/>
    </location>
</feature>
<feature type="repeat" description="WD 2">
    <location>
        <begin position="46"/>
        <end position="83"/>
    </location>
</feature>
<feature type="repeat" description="WD 3">
    <location>
        <begin position="86"/>
        <end position="124"/>
    </location>
</feature>
<feature type="repeat" description="WD 4">
    <location>
        <begin position="128"/>
        <end position="163"/>
    </location>
</feature>
<feature type="repeat" description="WD 5">
    <location>
        <begin position="223"/>
        <end position="262"/>
    </location>
</feature>
<feature type="modified residue" description="N6-acetyllysine" evidence="2">
    <location>
        <position position="179"/>
    </location>
</feature>
<feature type="modified residue" description="Phosphoserine" evidence="2">
    <location>
        <position position="211"/>
    </location>
</feature>
<feature type="cross-link" description="Glycyl lysine isopeptide (Lys-Gly) (interchain with G-Cter in ubiquitin)" evidence="2">
    <location>
        <position position="216"/>
    </location>
</feature>
<feature type="sequence conflict" description="In Ref. 2; AAB39606." evidence="5" ref="2">
    <original>C</original>
    <variation>W</variation>
    <location>
        <position position="62"/>
    </location>
</feature>
<feature type="sequence conflict" description="In Ref. 2; AAB39606." evidence="5" ref="2">
    <original>G</original>
    <variation>A</variation>
    <location>
        <position position="156"/>
    </location>
</feature>
<feature type="sequence conflict" description="In Ref. 1; AAD38038." evidence="5" ref="1">
    <original>R</original>
    <variation>W</variation>
    <location>
        <position position="165"/>
    </location>
</feature>
<accession>Q9WVA3</accession>
<accession>P97397</accession>
<accession>Q6ZWM5</accession>
<organism>
    <name type="scientific">Mus musculus</name>
    <name type="common">Mouse</name>
    <dbReference type="NCBI Taxonomy" id="10090"/>
    <lineage>
        <taxon>Eukaryota</taxon>
        <taxon>Metazoa</taxon>
        <taxon>Chordata</taxon>
        <taxon>Craniata</taxon>
        <taxon>Vertebrata</taxon>
        <taxon>Euteleostomi</taxon>
        <taxon>Mammalia</taxon>
        <taxon>Eutheria</taxon>
        <taxon>Euarchontoglires</taxon>
        <taxon>Glires</taxon>
        <taxon>Rodentia</taxon>
        <taxon>Myomorpha</taxon>
        <taxon>Muroidea</taxon>
        <taxon>Muridae</taxon>
        <taxon>Murinae</taxon>
        <taxon>Mus</taxon>
        <taxon>Mus</taxon>
    </lineage>
</organism>
<protein>
    <recommendedName>
        <fullName>Mitotic checkpoint protein BUB3</fullName>
    </recommendedName>
    <alternativeName>
        <fullName>WD repeat type I transmembrane protein A72.5</fullName>
    </alternativeName>
</protein>
<gene>
    <name type="primary">Bub3</name>
</gene>
<dbReference type="EMBL" id="AF149822">
    <property type="protein sequence ID" value="AAD38038.1"/>
    <property type="molecule type" value="mRNA"/>
</dbReference>
<dbReference type="EMBL" id="U67327">
    <property type="protein sequence ID" value="AAB39606.1"/>
    <property type="status" value="ALT_FRAME"/>
    <property type="molecule type" value="mRNA"/>
</dbReference>
<dbReference type="EMBL" id="AK088534">
    <property type="protein sequence ID" value="BAC40409.1"/>
    <property type="molecule type" value="mRNA"/>
</dbReference>
<dbReference type="EMBL" id="BC025089">
    <property type="protein sequence ID" value="AAH25089.1"/>
    <property type="molecule type" value="mRNA"/>
</dbReference>
<dbReference type="CCDS" id="CCDS40160.1"/>
<dbReference type="RefSeq" id="NP_001304279.1">
    <property type="nucleotide sequence ID" value="NM_001317350.2"/>
</dbReference>
<dbReference type="RefSeq" id="NP_033904.2">
    <property type="nucleotide sequence ID" value="NM_009774.4"/>
</dbReference>
<dbReference type="SMR" id="Q9WVA3"/>
<dbReference type="BioGRID" id="198406">
    <property type="interactions" value="10"/>
</dbReference>
<dbReference type="ComplexPortal" id="CPX-3968">
    <property type="entry name" value="Mitotic Checkpoint Complex"/>
</dbReference>
<dbReference type="FunCoup" id="Q9WVA3">
    <property type="interactions" value="3504"/>
</dbReference>
<dbReference type="IntAct" id="Q9WVA3">
    <property type="interactions" value="3"/>
</dbReference>
<dbReference type="MINT" id="Q9WVA3"/>
<dbReference type="STRING" id="10090.ENSMUSP00000081547"/>
<dbReference type="GlyGen" id="Q9WVA3">
    <property type="glycosylation" value="2 sites, 1 N-linked glycan (1 site), 1 O-linked glycan (1 site)"/>
</dbReference>
<dbReference type="iPTMnet" id="Q9WVA3"/>
<dbReference type="PhosphoSitePlus" id="Q9WVA3"/>
<dbReference type="SwissPalm" id="Q9WVA3"/>
<dbReference type="REPRODUCTION-2DPAGE" id="Q9WVA3"/>
<dbReference type="jPOST" id="Q9WVA3"/>
<dbReference type="PaxDb" id="10090-ENSMUSP00000081547"/>
<dbReference type="PeptideAtlas" id="Q9WVA3"/>
<dbReference type="ProteomicsDB" id="265393"/>
<dbReference type="Pumba" id="Q9WVA3"/>
<dbReference type="Antibodypedia" id="1213">
    <property type="antibodies" value="379 antibodies from 41 providers"/>
</dbReference>
<dbReference type="DNASU" id="12237"/>
<dbReference type="Ensembl" id="ENSMUST00000084502.7">
    <property type="protein sequence ID" value="ENSMUSP00000081547.6"/>
    <property type="gene ID" value="ENSMUSG00000066979.7"/>
</dbReference>
<dbReference type="GeneID" id="12237"/>
<dbReference type="KEGG" id="mmu:12237"/>
<dbReference type="UCSC" id="uc009kbq.1">
    <property type="organism name" value="mouse"/>
</dbReference>
<dbReference type="AGR" id="MGI:1343463"/>
<dbReference type="CTD" id="9184"/>
<dbReference type="MGI" id="MGI:1343463">
    <property type="gene designation" value="Bub3"/>
</dbReference>
<dbReference type="VEuPathDB" id="HostDB:ENSMUSG00000066979"/>
<dbReference type="eggNOG" id="KOG1036">
    <property type="taxonomic scope" value="Eukaryota"/>
</dbReference>
<dbReference type="GeneTree" id="ENSGT00950000183091"/>
<dbReference type="HOGENOM" id="CLU_038526_0_0_1"/>
<dbReference type="InParanoid" id="Q9WVA3"/>
<dbReference type="OMA" id="WDSTLHI"/>
<dbReference type="OrthoDB" id="10262475at2759"/>
<dbReference type="PhylomeDB" id="Q9WVA3"/>
<dbReference type="TreeFam" id="TF105454"/>
<dbReference type="Reactome" id="R-MMU-141430">
    <property type="pathway name" value="Inactivation of APC/C via direct inhibition of the APC/C complex"/>
</dbReference>
<dbReference type="Reactome" id="R-MMU-141444">
    <property type="pathway name" value="Amplification of signal from unattached kinetochores via a MAD2 inhibitory signal"/>
</dbReference>
<dbReference type="Reactome" id="R-MMU-174184">
    <property type="pathway name" value="Cdc20:Phospho-APC/C mediated degradation of Cyclin A"/>
</dbReference>
<dbReference type="Reactome" id="R-MMU-176409">
    <property type="pathway name" value="APC/C:Cdc20 mediated degradation of mitotic proteins"/>
</dbReference>
<dbReference type="Reactome" id="R-MMU-179409">
    <property type="pathway name" value="APC-Cdc20 mediated degradation of Nek2A"/>
</dbReference>
<dbReference type="Reactome" id="R-MMU-2467813">
    <property type="pathway name" value="Separation of Sister Chromatids"/>
</dbReference>
<dbReference type="Reactome" id="R-MMU-2500257">
    <property type="pathway name" value="Resolution of Sister Chromatid Cohesion"/>
</dbReference>
<dbReference type="Reactome" id="R-MMU-5663220">
    <property type="pathway name" value="RHO GTPases Activate Formins"/>
</dbReference>
<dbReference type="Reactome" id="R-MMU-68877">
    <property type="pathway name" value="Mitotic Prometaphase"/>
</dbReference>
<dbReference type="Reactome" id="R-MMU-9648025">
    <property type="pathway name" value="EML4 and NUDC in mitotic spindle formation"/>
</dbReference>
<dbReference type="BioGRID-ORCS" id="12237">
    <property type="hits" value="25 hits in 75 CRISPR screens"/>
</dbReference>
<dbReference type="ChiTaRS" id="Bub3">
    <property type="organism name" value="mouse"/>
</dbReference>
<dbReference type="PRO" id="PR:Q9WVA3"/>
<dbReference type="Proteomes" id="UP000000589">
    <property type="component" value="Chromosome 7"/>
</dbReference>
<dbReference type="RNAct" id="Q9WVA3">
    <property type="molecule type" value="protein"/>
</dbReference>
<dbReference type="Bgee" id="ENSMUSG00000066979">
    <property type="expression patterns" value="Expressed in vestibular epithelium and 271 other cell types or tissues"/>
</dbReference>
<dbReference type="ExpressionAtlas" id="Q9WVA3">
    <property type="expression patterns" value="baseline and differential"/>
</dbReference>
<dbReference type="GO" id="GO:0000776">
    <property type="term" value="C:kinetochore"/>
    <property type="evidence" value="ECO:0000314"/>
    <property type="project" value="UniProtKB"/>
</dbReference>
<dbReference type="GO" id="GO:0033597">
    <property type="term" value="C:mitotic checkpoint complex"/>
    <property type="evidence" value="ECO:0000266"/>
    <property type="project" value="ComplexPortal"/>
</dbReference>
<dbReference type="GO" id="GO:0005654">
    <property type="term" value="C:nucleoplasm"/>
    <property type="evidence" value="ECO:0007669"/>
    <property type="project" value="Ensembl"/>
</dbReference>
<dbReference type="GO" id="GO:0008608">
    <property type="term" value="P:attachment of spindle microtubules to kinetochore"/>
    <property type="evidence" value="ECO:0007669"/>
    <property type="project" value="Ensembl"/>
</dbReference>
<dbReference type="GO" id="GO:0051301">
    <property type="term" value="P:cell division"/>
    <property type="evidence" value="ECO:0007669"/>
    <property type="project" value="UniProtKB-KW"/>
</dbReference>
<dbReference type="GO" id="GO:0051321">
    <property type="term" value="P:meiotic cell cycle"/>
    <property type="evidence" value="ECO:0007669"/>
    <property type="project" value="UniProtKB-KW"/>
</dbReference>
<dbReference type="GO" id="GO:0007094">
    <property type="term" value="P:mitotic spindle assembly checkpoint signaling"/>
    <property type="evidence" value="ECO:0000303"/>
    <property type="project" value="ComplexPortal"/>
</dbReference>
<dbReference type="GO" id="GO:0034501">
    <property type="term" value="P:protein localization to kinetochore"/>
    <property type="evidence" value="ECO:0007669"/>
    <property type="project" value="Ensembl"/>
</dbReference>
<dbReference type="GO" id="GO:0051983">
    <property type="term" value="P:regulation of chromosome segregation"/>
    <property type="evidence" value="ECO:0000314"/>
    <property type="project" value="UniProtKB"/>
</dbReference>
<dbReference type="FunFam" id="2.130.10.10:FF:000047">
    <property type="entry name" value="Mitotic checkpoint protein bub3, putative"/>
    <property type="match status" value="1"/>
</dbReference>
<dbReference type="Gene3D" id="2.130.10.10">
    <property type="entry name" value="YVTN repeat-like/Quinoprotein amine dehydrogenase"/>
    <property type="match status" value="1"/>
</dbReference>
<dbReference type="InterPro" id="IPR020472">
    <property type="entry name" value="G-protein_beta_WD-40_rep"/>
</dbReference>
<dbReference type="InterPro" id="IPR015943">
    <property type="entry name" value="WD40/YVTN_repeat-like_dom_sf"/>
</dbReference>
<dbReference type="InterPro" id="IPR036322">
    <property type="entry name" value="WD40_repeat_dom_sf"/>
</dbReference>
<dbReference type="InterPro" id="IPR001680">
    <property type="entry name" value="WD40_rpt"/>
</dbReference>
<dbReference type="PANTHER" id="PTHR10971">
    <property type="entry name" value="MRNA EXPORT FACTOR AND BUB3"/>
    <property type="match status" value="1"/>
</dbReference>
<dbReference type="Pfam" id="PF00400">
    <property type="entry name" value="WD40"/>
    <property type="match status" value="3"/>
</dbReference>
<dbReference type="PRINTS" id="PR00320">
    <property type="entry name" value="GPROTEINBRPT"/>
</dbReference>
<dbReference type="SMART" id="SM00320">
    <property type="entry name" value="WD40"/>
    <property type="match status" value="6"/>
</dbReference>
<dbReference type="SUPFAM" id="SSF50978">
    <property type="entry name" value="WD40 repeat-like"/>
    <property type="match status" value="1"/>
</dbReference>
<dbReference type="PROSITE" id="PS50082">
    <property type="entry name" value="WD_REPEATS_2"/>
    <property type="match status" value="2"/>
</dbReference>
<dbReference type="PROSITE" id="PS50294">
    <property type="entry name" value="WD_REPEATS_REGION"/>
    <property type="match status" value="1"/>
</dbReference>
<sequence>MTGSNEFKLNQPPEDGISSVKFSPNTSQFLLVSSWDTSVRLYDVPANSMRLKYQHTGAVLDCAFYDPTHAWSGGLDHQLKMHDLNTDQENLVGTHDAPIRCVEYCPEVNVMVTGSWDQTVKLWDPRTPCNAGTFSQPEKVYTLSVSGDRLIVGTAGRRVLVWDLRNMGYVQQRRESSLKYQTRCIRAFPNKQGYVLSSIEGRVAVEYLDPSPEVQKKKYAFKCHRLKENNIEQIYPVNAISFHNIHNTFATGGSDGFVNIWDPFNKKRLCQFHRYPTSIASLAFSNDGTTLAIASSYMYEMDDTEHPEDGIFIRQVTDAETKPKST</sequence>